<reference key="1">
    <citation type="journal article" date="1995" name="Plant Mol. Biol. Rep.">
        <title>Nucleotide sequence of the cyanelle DNA from Cyanophora paradoxa.</title>
        <authorList>
            <person name="Stirewalt V.L."/>
            <person name="Michalowski C.B."/>
            <person name="Loeffelhardt W."/>
            <person name="Bohnert H.J."/>
            <person name="Bryant D.A."/>
        </authorList>
    </citation>
    <scope>NUCLEOTIDE SEQUENCE [LARGE SCALE GENOMIC DNA]</scope>
    <source>
        <strain>UTEX LB 555 / Pringsheim</strain>
    </source>
</reference>
<reference key="2">
    <citation type="book" date="1997" name="Eukaryotism and symbiosis">
        <title>The complete sequence of the cyanelle genome of Cyanophora paradoxa: the genetic complexity of a primitive plastid.</title>
        <editorList>
            <person name="Schenk H.E.A."/>
            <person name="Herrmann R."/>
            <person name="Jeon K.W."/>
            <person name="Mueller N.E."/>
            <person name="Schwemmler W."/>
        </editorList>
        <authorList>
            <person name="Loeffelhardt W."/>
            <person name="Stirewalt V.L."/>
            <person name="Michalowski C.B."/>
            <person name="Annarella M."/>
            <person name="Farley J.Y."/>
            <person name="Schluchter W.M."/>
            <person name="Chung S."/>
            <person name="Newmann-Spallart C."/>
            <person name="Steiner J.M."/>
            <person name="Jakowitsch J."/>
            <person name="Bohnert H.J."/>
            <person name="Bryant D.A."/>
        </authorList>
    </citation>
    <scope>NUCLEOTIDE SEQUENCE [LARGE SCALE GENOMIC DNA]</scope>
    <source>
        <strain>UTEX LB 555 / Pringsheim</strain>
    </source>
</reference>
<keyword id="KW-0194">Cyanelle</keyword>
<keyword id="KW-0934">Plastid</keyword>
<keyword id="KW-0687">Ribonucleoprotein</keyword>
<keyword id="KW-0689">Ribosomal protein</keyword>
<dbReference type="EMBL" id="U30821">
    <property type="protein sequence ID" value="AAA81258.1"/>
    <property type="molecule type" value="Genomic_DNA"/>
</dbReference>
<dbReference type="PIR" id="T06915">
    <property type="entry name" value="T06915"/>
</dbReference>
<dbReference type="RefSeq" id="NP_043227.1">
    <property type="nucleotide sequence ID" value="NC_001675.1"/>
</dbReference>
<dbReference type="SMR" id="P48132"/>
<dbReference type="GeneID" id="801654"/>
<dbReference type="GO" id="GO:0009842">
    <property type="term" value="C:cyanelle"/>
    <property type="evidence" value="ECO:0007669"/>
    <property type="project" value="UniProtKB-SubCell"/>
</dbReference>
<dbReference type="GO" id="GO:0022627">
    <property type="term" value="C:cytosolic small ribosomal subunit"/>
    <property type="evidence" value="ECO:0007669"/>
    <property type="project" value="TreeGrafter"/>
</dbReference>
<dbReference type="GO" id="GO:0003735">
    <property type="term" value="F:structural constituent of ribosome"/>
    <property type="evidence" value="ECO:0007669"/>
    <property type="project" value="InterPro"/>
</dbReference>
<dbReference type="GO" id="GO:0006412">
    <property type="term" value="P:translation"/>
    <property type="evidence" value="ECO:0007669"/>
    <property type="project" value="InterPro"/>
</dbReference>
<dbReference type="CDD" id="cd01425">
    <property type="entry name" value="RPS2"/>
    <property type="match status" value="1"/>
</dbReference>
<dbReference type="FunFam" id="1.10.287.610:FF:000001">
    <property type="entry name" value="30S ribosomal protein S2"/>
    <property type="match status" value="1"/>
</dbReference>
<dbReference type="Gene3D" id="3.40.50.10490">
    <property type="entry name" value="Glucose-6-phosphate isomerase like protein, domain 1"/>
    <property type="match status" value="1"/>
</dbReference>
<dbReference type="Gene3D" id="1.10.287.610">
    <property type="entry name" value="Helix hairpin bin"/>
    <property type="match status" value="1"/>
</dbReference>
<dbReference type="HAMAP" id="MF_00291_B">
    <property type="entry name" value="Ribosomal_uS2_B"/>
    <property type="match status" value="1"/>
</dbReference>
<dbReference type="InterPro" id="IPR001865">
    <property type="entry name" value="Ribosomal_uS2"/>
</dbReference>
<dbReference type="InterPro" id="IPR005706">
    <property type="entry name" value="Ribosomal_uS2_bac/mit/plastid"/>
</dbReference>
<dbReference type="InterPro" id="IPR018130">
    <property type="entry name" value="Ribosomal_uS2_CS"/>
</dbReference>
<dbReference type="InterPro" id="IPR023591">
    <property type="entry name" value="Ribosomal_uS2_flav_dom_sf"/>
</dbReference>
<dbReference type="NCBIfam" id="TIGR01011">
    <property type="entry name" value="rpsB_bact"/>
    <property type="match status" value="1"/>
</dbReference>
<dbReference type="PANTHER" id="PTHR12534">
    <property type="entry name" value="30S RIBOSOMAL PROTEIN S2 PROKARYOTIC AND ORGANELLAR"/>
    <property type="match status" value="1"/>
</dbReference>
<dbReference type="PANTHER" id="PTHR12534:SF0">
    <property type="entry name" value="SMALL RIBOSOMAL SUBUNIT PROTEIN US2M"/>
    <property type="match status" value="1"/>
</dbReference>
<dbReference type="Pfam" id="PF00318">
    <property type="entry name" value="Ribosomal_S2"/>
    <property type="match status" value="1"/>
</dbReference>
<dbReference type="PRINTS" id="PR00395">
    <property type="entry name" value="RIBOSOMALS2"/>
</dbReference>
<dbReference type="SUPFAM" id="SSF52313">
    <property type="entry name" value="Ribosomal protein S2"/>
    <property type="match status" value="1"/>
</dbReference>
<dbReference type="PROSITE" id="PS00962">
    <property type="entry name" value="RIBOSOMAL_S2_1"/>
    <property type="match status" value="1"/>
</dbReference>
<dbReference type="PROSITE" id="PS00963">
    <property type="entry name" value="RIBOSOMAL_S2_2"/>
    <property type="match status" value="1"/>
</dbReference>
<accession>P48132</accession>
<feature type="chain" id="PRO_0000134285" description="Small ribosomal subunit protein uS2c">
    <location>
        <begin position="1"/>
        <end position="233"/>
    </location>
</feature>
<geneLocation type="cyanelle"/>
<name>RR2_CYAPA</name>
<protein>
    <recommendedName>
        <fullName evidence="1">Small ribosomal subunit protein uS2c</fullName>
    </recommendedName>
    <alternativeName>
        <fullName>Cyanelle 30S ribosomal protein S2</fullName>
    </alternativeName>
</protein>
<gene>
    <name type="primary">rps2</name>
</gene>
<evidence type="ECO:0000305" key="1"/>
<organism>
    <name type="scientific">Cyanophora paradoxa</name>
    <dbReference type="NCBI Taxonomy" id="2762"/>
    <lineage>
        <taxon>Eukaryota</taxon>
        <taxon>Glaucocystophyceae</taxon>
        <taxon>Cyanophoraceae</taxon>
        <taxon>Cyanophora</taxon>
    </lineage>
</organism>
<comment type="subcellular location">
    <subcellularLocation>
        <location>Plastid</location>
        <location>Cyanelle</location>
    </subcellularLocation>
</comment>
<comment type="similarity">
    <text evidence="1">Belongs to the universal ribosomal protein uS2 family.</text>
</comment>
<proteinExistence type="inferred from homology"/>
<sequence>MAIVTLDEMLEAGVHFGHQSRRWNPKMSQYIFTERNGIHIIDLVQTAQLLAEAYDFLRISAEEGKKVLFIGTKRQAANIIAQEATRCGAFYINQRWLGGTLTNWTTIQSRVEYLKELEMREESGALDLLPKKEAAILRRQLEKLRKSLGGIQTMRHIPDIVVIVDQKRENNAVQECKKLNIPIIALLDTNSDPDVVDIPIPGNDDAIRSIKLIIGKLADAILEGSHTKTSSAE</sequence>